<sequence length="1165" mass="128801">MLEGPILAVSRQTKSVVDIPGAPQRYSFAKVSAPIEVPGLLDLQLDSYSWLIGTPEWRARQKEEFGEGARVTSGLENILEELSPIQDYSGNMSLSLSEPRFEDVKNTIDEAKEKDINYAAPLYVTAEFVNNTTGEIKSQTVFIGDFPMMTDKGTFIINGTERVVVSQLVRSPGVYFDQTIDKSTERPLHAVKVIPSRGAWLEFDVDKRDSVGVRIDRKRRQPVTVLLKALGWTTEQITERFGFSEIMMSTLESDGVANTDEALLEIYRKQRPGEQPTRDLAQSLLDNSFFRAKRYDLARVGRYKINRKLGLGGDHDGLMTLTEEDIATTIEYLVRLHAGERVMTSPNGEEIPVETDDIDHFGNRRLRTVGELIQNQVRVGLSRMERVVRERMTTQDAESITPTSLINVRPVSAAIREFFGTSQLSQFMDQNNSLSGLTHKRRLSALGPGGLSRERAGIEVRDVHPSHYGRMCPIETPEGPNIGLIGSLASYARVNPFGFIETPYRRIIDGKLTDQIDYLTADEEDRFVVAQANTHYDEEGNITDETVTVRLKDGDIAMVGRNAVDYMDVSPRQMVSVGTAMIPFLEHDDANRALMGANMQKQAVPLIRAEAPFVGTGMEQRAAYDAGDLVITPVAGVVENVSADFITIMADDGKRETYLLRKFQRTNQGTSYNQKPLVNLGERVEAGQVIADGPGTFNGEMSLGRNLLVAFMPWEGHNYEDAIILNQNIVEQDILTSIHIEEHEIDARDTKLGAEEITRDIPNVSEEVLKDLDDRGIVRIGADVRDGDILVGKVTPKGETELTPEERLLRAIFGEKAREVRDTSMKVPHGETGKVIGVRHFSREDDDDLAPGVNEMIRIYVAQKRKIQDGDKLAGRHGNKGVVGKILPQEDMPFLPDGTPVDIILNTHGVPRRMNIGQVLETHLGWLASAGWSVDPEDPENAELVKTLPADLLEVPAGSLTATPVFDGASNEELSGLLANSRPNRDGDVMVNADGKATLIDGRSGEPYPYPVSIGYMYMLKLHHLVDEKIHARSTGPYSMITQQPLGGKAQFGGQRFGEMEVWAMQAYGAAYTLQELLTIKSDDVVGRVKVYEAIVKGENIPDPGIPESFKVLLKELQSLCLNVEVLSADGTPMELAGDDDDFDQAGASLGINLSRDERSDADTA</sequence>
<organism>
    <name type="scientific">Corynebacterium glutamicum (strain R)</name>
    <dbReference type="NCBI Taxonomy" id="340322"/>
    <lineage>
        <taxon>Bacteria</taxon>
        <taxon>Bacillati</taxon>
        <taxon>Actinomycetota</taxon>
        <taxon>Actinomycetes</taxon>
        <taxon>Mycobacteriales</taxon>
        <taxon>Corynebacteriaceae</taxon>
        <taxon>Corynebacterium</taxon>
    </lineage>
</organism>
<dbReference type="EC" id="2.7.7.6" evidence="1"/>
<dbReference type="EMBL" id="AP009044">
    <property type="protein sequence ID" value="BAF53559.1"/>
    <property type="molecule type" value="Genomic_DNA"/>
</dbReference>
<dbReference type="RefSeq" id="WP_011896752.1">
    <property type="nucleotide sequence ID" value="NC_009342.1"/>
</dbReference>
<dbReference type="SMR" id="A4QBG2"/>
<dbReference type="KEGG" id="cgt:cgR_0591"/>
<dbReference type="HOGENOM" id="CLU_000524_4_3_11"/>
<dbReference type="PhylomeDB" id="A4QBG2"/>
<dbReference type="Proteomes" id="UP000006698">
    <property type="component" value="Chromosome"/>
</dbReference>
<dbReference type="GO" id="GO:0000428">
    <property type="term" value="C:DNA-directed RNA polymerase complex"/>
    <property type="evidence" value="ECO:0007669"/>
    <property type="project" value="UniProtKB-KW"/>
</dbReference>
<dbReference type="GO" id="GO:0003677">
    <property type="term" value="F:DNA binding"/>
    <property type="evidence" value="ECO:0007669"/>
    <property type="project" value="UniProtKB-UniRule"/>
</dbReference>
<dbReference type="GO" id="GO:0003899">
    <property type="term" value="F:DNA-directed RNA polymerase activity"/>
    <property type="evidence" value="ECO:0007669"/>
    <property type="project" value="UniProtKB-UniRule"/>
</dbReference>
<dbReference type="GO" id="GO:0032549">
    <property type="term" value="F:ribonucleoside binding"/>
    <property type="evidence" value="ECO:0007669"/>
    <property type="project" value="InterPro"/>
</dbReference>
<dbReference type="GO" id="GO:0006351">
    <property type="term" value="P:DNA-templated transcription"/>
    <property type="evidence" value="ECO:0007669"/>
    <property type="project" value="UniProtKB-UniRule"/>
</dbReference>
<dbReference type="CDD" id="cd00653">
    <property type="entry name" value="RNA_pol_B_RPB2"/>
    <property type="match status" value="1"/>
</dbReference>
<dbReference type="Gene3D" id="2.40.50.100">
    <property type="match status" value="1"/>
</dbReference>
<dbReference type="Gene3D" id="2.40.50.150">
    <property type="match status" value="1"/>
</dbReference>
<dbReference type="Gene3D" id="3.90.1100.10">
    <property type="match status" value="1"/>
</dbReference>
<dbReference type="Gene3D" id="2.30.150.10">
    <property type="entry name" value="DNA-directed RNA polymerase, beta subunit, external 1 domain"/>
    <property type="match status" value="1"/>
</dbReference>
<dbReference type="Gene3D" id="2.40.270.10">
    <property type="entry name" value="DNA-directed RNA polymerase, subunit 2, domain 6"/>
    <property type="match status" value="1"/>
</dbReference>
<dbReference type="Gene3D" id="3.90.1800.10">
    <property type="entry name" value="RNA polymerase alpha subunit dimerisation domain"/>
    <property type="match status" value="1"/>
</dbReference>
<dbReference type="Gene3D" id="3.90.1110.10">
    <property type="entry name" value="RNA polymerase Rpb2, domain 2"/>
    <property type="match status" value="1"/>
</dbReference>
<dbReference type="HAMAP" id="MF_01321">
    <property type="entry name" value="RNApol_bact_RpoB"/>
    <property type="match status" value="1"/>
</dbReference>
<dbReference type="InterPro" id="IPR042107">
    <property type="entry name" value="DNA-dir_RNA_pol_bsu_ext_1_sf"/>
</dbReference>
<dbReference type="InterPro" id="IPR019462">
    <property type="entry name" value="DNA-dir_RNA_pol_bsu_external_1"/>
</dbReference>
<dbReference type="InterPro" id="IPR015712">
    <property type="entry name" value="DNA-dir_RNA_pol_su2"/>
</dbReference>
<dbReference type="InterPro" id="IPR007120">
    <property type="entry name" value="DNA-dir_RNAP_su2_dom"/>
</dbReference>
<dbReference type="InterPro" id="IPR037033">
    <property type="entry name" value="DNA-dir_RNAP_su2_hyb_sf"/>
</dbReference>
<dbReference type="InterPro" id="IPR010243">
    <property type="entry name" value="RNA_pol_bsu_bac"/>
</dbReference>
<dbReference type="InterPro" id="IPR007121">
    <property type="entry name" value="RNA_pol_bsu_CS"/>
</dbReference>
<dbReference type="InterPro" id="IPR007644">
    <property type="entry name" value="RNA_pol_bsu_protrusion"/>
</dbReference>
<dbReference type="InterPro" id="IPR007642">
    <property type="entry name" value="RNA_pol_Rpb2_2"/>
</dbReference>
<dbReference type="InterPro" id="IPR037034">
    <property type="entry name" value="RNA_pol_Rpb2_2_sf"/>
</dbReference>
<dbReference type="InterPro" id="IPR007645">
    <property type="entry name" value="RNA_pol_Rpb2_3"/>
</dbReference>
<dbReference type="InterPro" id="IPR007641">
    <property type="entry name" value="RNA_pol_Rpb2_7"/>
</dbReference>
<dbReference type="InterPro" id="IPR014724">
    <property type="entry name" value="RNA_pol_RPB2_OB-fold"/>
</dbReference>
<dbReference type="NCBIfam" id="NF001616">
    <property type="entry name" value="PRK00405.1"/>
    <property type="match status" value="1"/>
</dbReference>
<dbReference type="NCBIfam" id="TIGR02013">
    <property type="entry name" value="rpoB"/>
    <property type="match status" value="1"/>
</dbReference>
<dbReference type="PANTHER" id="PTHR20856">
    <property type="entry name" value="DNA-DIRECTED RNA POLYMERASE I SUBUNIT 2"/>
    <property type="match status" value="1"/>
</dbReference>
<dbReference type="Pfam" id="PF04563">
    <property type="entry name" value="RNA_pol_Rpb2_1"/>
    <property type="match status" value="1"/>
</dbReference>
<dbReference type="Pfam" id="PF04561">
    <property type="entry name" value="RNA_pol_Rpb2_2"/>
    <property type="match status" value="1"/>
</dbReference>
<dbReference type="Pfam" id="PF04565">
    <property type="entry name" value="RNA_pol_Rpb2_3"/>
    <property type="match status" value="1"/>
</dbReference>
<dbReference type="Pfam" id="PF10385">
    <property type="entry name" value="RNA_pol_Rpb2_45"/>
    <property type="match status" value="1"/>
</dbReference>
<dbReference type="Pfam" id="PF00562">
    <property type="entry name" value="RNA_pol_Rpb2_6"/>
    <property type="match status" value="1"/>
</dbReference>
<dbReference type="Pfam" id="PF04560">
    <property type="entry name" value="RNA_pol_Rpb2_7"/>
    <property type="match status" value="1"/>
</dbReference>
<dbReference type="SUPFAM" id="SSF64484">
    <property type="entry name" value="beta and beta-prime subunits of DNA dependent RNA-polymerase"/>
    <property type="match status" value="1"/>
</dbReference>
<dbReference type="PROSITE" id="PS01166">
    <property type="entry name" value="RNA_POL_BETA"/>
    <property type="match status" value="1"/>
</dbReference>
<keyword id="KW-0240">DNA-directed RNA polymerase</keyword>
<keyword id="KW-0548">Nucleotidyltransferase</keyword>
<keyword id="KW-0804">Transcription</keyword>
<keyword id="KW-0808">Transferase</keyword>
<gene>
    <name evidence="1" type="primary">rpoB</name>
    <name type="ordered locus">cgR_0591</name>
</gene>
<name>RPOB_CORGB</name>
<reference key="1">
    <citation type="journal article" date="2007" name="Microbiology">
        <title>Comparative analysis of the Corynebacterium glutamicum group and complete genome sequence of strain R.</title>
        <authorList>
            <person name="Yukawa H."/>
            <person name="Omumasaba C.A."/>
            <person name="Nonaka H."/>
            <person name="Kos P."/>
            <person name="Okai N."/>
            <person name="Suzuki N."/>
            <person name="Suda M."/>
            <person name="Tsuge Y."/>
            <person name="Watanabe J."/>
            <person name="Ikeda Y."/>
            <person name="Vertes A.A."/>
            <person name="Inui M."/>
        </authorList>
    </citation>
    <scope>NUCLEOTIDE SEQUENCE [LARGE SCALE GENOMIC DNA]</scope>
    <source>
        <strain>R</strain>
    </source>
</reference>
<feature type="chain" id="PRO_0000300304" description="DNA-directed RNA polymerase subunit beta">
    <location>
        <begin position="1"/>
        <end position="1165"/>
    </location>
</feature>
<proteinExistence type="inferred from homology"/>
<evidence type="ECO:0000255" key="1">
    <source>
        <dbReference type="HAMAP-Rule" id="MF_01321"/>
    </source>
</evidence>
<accession>A4QBG2</accession>
<comment type="function">
    <text evidence="1">DNA-dependent RNA polymerase catalyzes the transcription of DNA into RNA using the four ribonucleoside triphosphates as substrates.</text>
</comment>
<comment type="catalytic activity">
    <reaction evidence="1">
        <text>RNA(n) + a ribonucleoside 5'-triphosphate = RNA(n+1) + diphosphate</text>
        <dbReference type="Rhea" id="RHEA:21248"/>
        <dbReference type="Rhea" id="RHEA-COMP:14527"/>
        <dbReference type="Rhea" id="RHEA-COMP:17342"/>
        <dbReference type="ChEBI" id="CHEBI:33019"/>
        <dbReference type="ChEBI" id="CHEBI:61557"/>
        <dbReference type="ChEBI" id="CHEBI:140395"/>
        <dbReference type="EC" id="2.7.7.6"/>
    </reaction>
</comment>
<comment type="subunit">
    <text evidence="1">The RNAP catalytic core consists of 2 alpha, 1 beta, 1 beta' and 1 omega subunit. When a sigma factor is associated with the core the holoenzyme is formed, which can initiate transcription.</text>
</comment>
<comment type="similarity">
    <text evidence="1">Belongs to the RNA polymerase beta chain family.</text>
</comment>
<protein>
    <recommendedName>
        <fullName evidence="1">DNA-directed RNA polymerase subunit beta</fullName>
        <shortName evidence="1">RNAP subunit beta</shortName>
        <ecNumber evidence="1">2.7.7.6</ecNumber>
    </recommendedName>
    <alternativeName>
        <fullName evidence="1">RNA polymerase subunit beta</fullName>
    </alternativeName>
    <alternativeName>
        <fullName evidence="1">Transcriptase subunit beta</fullName>
    </alternativeName>
</protein>